<dbReference type="EC" id="3.1.-.-" evidence="1"/>
<dbReference type="EMBL" id="CH408156">
    <property type="protein sequence ID" value="EDK38080.2"/>
    <property type="molecule type" value="Genomic_DNA"/>
</dbReference>
<dbReference type="RefSeq" id="XP_001486507.1">
    <property type="nucleotide sequence ID" value="XM_001486457.1"/>
</dbReference>
<dbReference type="SMR" id="A5DFX7"/>
<dbReference type="FunCoup" id="A5DFX7">
    <property type="interactions" value="414"/>
</dbReference>
<dbReference type="STRING" id="294746.A5DFX7"/>
<dbReference type="GeneID" id="5127834"/>
<dbReference type="KEGG" id="pgu:PGUG_02178"/>
<dbReference type="VEuPathDB" id="FungiDB:PGUG_02178"/>
<dbReference type="eggNOG" id="KOG3005">
    <property type="taxonomic scope" value="Eukaryota"/>
</dbReference>
<dbReference type="HOGENOM" id="CLU_030739_1_1_1"/>
<dbReference type="InParanoid" id="A5DFX7"/>
<dbReference type="OMA" id="CAVICHL"/>
<dbReference type="OrthoDB" id="24645at2759"/>
<dbReference type="Proteomes" id="UP000001997">
    <property type="component" value="Unassembled WGS sequence"/>
</dbReference>
<dbReference type="GO" id="GO:0033557">
    <property type="term" value="C:Slx1-Slx4 complex"/>
    <property type="evidence" value="ECO:0007669"/>
    <property type="project" value="UniProtKB-UniRule"/>
</dbReference>
<dbReference type="GO" id="GO:0017108">
    <property type="term" value="F:5'-flap endonuclease activity"/>
    <property type="evidence" value="ECO:0007669"/>
    <property type="project" value="EnsemblFungi"/>
</dbReference>
<dbReference type="GO" id="GO:0008821">
    <property type="term" value="F:crossover junction DNA endonuclease activity"/>
    <property type="evidence" value="ECO:0007669"/>
    <property type="project" value="TreeGrafter"/>
</dbReference>
<dbReference type="GO" id="GO:0008270">
    <property type="term" value="F:zinc ion binding"/>
    <property type="evidence" value="ECO:0007669"/>
    <property type="project" value="UniProtKB-KW"/>
</dbReference>
<dbReference type="GO" id="GO:0006261">
    <property type="term" value="P:DNA-templated DNA replication"/>
    <property type="evidence" value="ECO:0007669"/>
    <property type="project" value="EnsemblFungi"/>
</dbReference>
<dbReference type="GO" id="GO:0000724">
    <property type="term" value="P:double-strand break repair via homologous recombination"/>
    <property type="evidence" value="ECO:0007669"/>
    <property type="project" value="TreeGrafter"/>
</dbReference>
<dbReference type="CDD" id="cd10455">
    <property type="entry name" value="GIY-YIG_SLX1"/>
    <property type="match status" value="1"/>
</dbReference>
<dbReference type="Gene3D" id="3.40.1440.10">
    <property type="entry name" value="GIY-YIG endonuclease"/>
    <property type="match status" value="1"/>
</dbReference>
<dbReference type="Gene3D" id="3.30.40.10">
    <property type="entry name" value="Zinc/RING finger domain, C3HC4 (zinc finger)"/>
    <property type="match status" value="1"/>
</dbReference>
<dbReference type="HAMAP" id="MF_03100">
    <property type="entry name" value="Endonuc_su_Slx1"/>
    <property type="match status" value="1"/>
</dbReference>
<dbReference type="InterPro" id="IPR000305">
    <property type="entry name" value="GIY-YIG_endonuc"/>
</dbReference>
<dbReference type="InterPro" id="IPR035901">
    <property type="entry name" value="GIY-YIG_endonuc_sf"/>
</dbReference>
<dbReference type="InterPro" id="IPR027520">
    <property type="entry name" value="Slx1"/>
</dbReference>
<dbReference type="InterPro" id="IPR050381">
    <property type="entry name" value="SLX1_endonuclease"/>
</dbReference>
<dbReference type="InterPro" id="IPR013083">
    <property type="entry name" value="Znf_RING/FYVE/PHD"/>
</dbReference>
<dbReference type="PANTHER" id="PTHR20208">
    <property type="entry name" value="STRUCTURE-SPECIFIC ENDONUCLEASE SUBUNIT SLX1"/>
    <property type="match status" value="1"/>
</dbReference>
<dbReference type="PANTHER" id="PTHR20208:SF10">
    <property type="entry name" value="STRUCTURE-SPECIFIC ENDONUCLEASE SUBUNIT SLX1"/>
    <property type="match status" value="1"/>
</dbReference>
<dbReference type="Pfam" id="PF01541">
    <property type="entry name" value="GIY-YIG"/>
    <property type="match status" value="1"/>
</dbReference>
<dbReference type="SUPFAM" id="SSF82771">
    <property type="entry name" value="GIY-YIG endonuclease"/>
    <property type="match status" value="1"/>
</dbReference>
<dbReference type="PROSITE" id="PS50164">
    <property type="entry name" value="GIY_YIG"/>
    <property type="match status" value="1"/>
</dbReference>
<feature type="chain" id="PRO_0000383795" description="Structure-specific endonuclease subunit SLX1">
    <location>
        <begin position="1"/>
        <end position="295"/>
    </location>
</feature>
<feature type="domain" description="GIY-YIG" evidence="1">
    <location>
        <begin position="11"/>
        <end position="93"/>
    </location>
</feature>
<feature type="zinc finger region" description="SLX1-type" evidence="1">
    <location>
        <begin position="205"/>
        <end position="272"/>
    </location>
</feature>
<feature type="region of interest" description="Disordered" evidence="2">
    <location>
        <begin position="85"/>
        <end position="133"/>
    </location>
</feature>
<name>SLX1_PICGU</name>
<sequence>MAPTQIFVSPEFYGVYILQSEPSPRSFYIGSTPDPIRRLRQHNGDLKQGAFRTRRTSRRPWKMIAITHNFPSRVAALQFEHALQHPKTSRHMAGGGGSVTATAETAKSAPVAGKSDATSPAKNRRNAAPVARSGRTHLRNVARLLESPYFSRMGLKVTIFDPSLFDMDLLPAQLQSFAAFSGARTAACSDYFSVAKKAALTTAHCCLCSDAIDYVPEMLPESIKDVLLVLPLIAVCPSCAVICHLRCLAASWYQSSEINAALIPSDVSCSQCGAQTSWRLVADMATKLRQYALSS</sequence>
<evidence type="ECO:0000255" key="1">
    <source>
        <dbReference type="HAMAP-Rule" id="MF_03100"/>
    </source>
</evidence>
<evidence type="ECO:0000256" key="2">
    <source>
        <dbReference type="SAM" id="MobiDB-lite"/>
    </source>
</evidence>
<comment type="function">
    <text evidence="1">Catalytic subunit of the SLX1-SLX4 structure-specific endonuclease that resolves DNA secondary structures generated during DNA repair and recombination. Has endonuclease activity towards branched DNA substrates, introducing single-strand cuts in duplex DNA close to junctions with ss-DNA.</text>
</comment>
<comment type="cofactor">
    <cofactor evidence="1">
        <name>a divalent metal cation</name>
        <dbReference type="ChEBI" id="CHEBI:60240"/>
    </cofactor>
</comment>
<comment type="subunit">
    <text evidence="1">Forms a heterodimer with SLX4.</text>
</comment>
<comment type="subcellular location">
    <subcellularLocation>
        <location evidence="1">Nucleus</location>
    </subcellularLocation>
</comment>
<comment type="similarity">
    <text evidence="1">Belongs to the SLX1 family.</text>
</comment>
<protein>
    <recommendedName>
        <fullName evidence="1">Structure-specific endonuclease subunit SLX1</fullName>
        <ecNumber evidence="1">3.1.-.-</ecNumber>
    </recommendedName>
</protein>
<organism>
    <name type="scientific">Meyerozyma guilliermondii (strain ATCC 6260 / CBS 566 / DSM 6381 / JCM 1539 / NBRC 10279 / NRRL Y-324)</name>
    <name type="common">Yeast</name>
    <name type="synonym">Candida guilliermondii</name>
    <dbReference type="NCBI Taxonomy" id="294746"/>
    <lineage>
        <taxon>Eukaryota</taxon>
        <taxon>Fungi</taxon>
        <taxon>Dikarya</taxon>
        <taxon>Ascomycota</taxon>
        <taxon>Saccharomycotina</taxon>
        <taxon>Pichiomycetes</taxon>
        <taxon>Debaryomycetaceae</taxon>
        <taxon>Meyerozyma</taxon>
    </lineage>
</organism>
<reference key="1">
    <citation type="journal article" date="2009" name="Nature">
        <title>Evolution of pathogenicity and sexual reproduction in eight Candida genomes.</title>
        <authorList>
            <person name="Butler G."/>
            <person name="Rasmussen M.D."/>
            <person name="Lin M.F."/>
            <person name="Santos M.A.S."/>
            <person name="Sakthikumar S."/>
            <person name="Munro C.A."/>
            <person name="Rheinbay E."/>
            <person name="Grabherr M."/>
            <person name="Forche A."/>
            <person name="Reedy J.L."/>
            <person name="Agrafioti I."/>
            <person name="Arnaud M.B."/>
            <person name="Bates S."/>
            <person name="Brown A.J.P."/>
            <person name="Brunke S."/>
            <person name="Costanzo M.C."/>
            <person name="Fitzpatrick D.A."/>
            <person name="de Groot P.W.J."/>
            <person name="Harris D."/>
            <person name="Hoyer L.L."/>
            <person name="Hube B."/>
            <person name="Klis F.M."/>
            <person name="Kodira C."/>
            <person name="Lennard N."/>
            <person name="Logue M.E."/>
            <person name="Martin R."/>
            <person name="Neiman A.M."/>
            <person name="Nikolaou E."/>
            <person name="Quail M.A."/>
            <person name="Quinn J."/>
            <person name="Santos M.C."/>
            <person name="Schmitzberger F.F."/>
            <person name="Sherlock G."/>
            <person name="Shah P."/>
            <person name="Silverstein K.A.T."/>
            <person name="Skrzypek M.S."/>
            <person name="Soll D."/>
            <person name="Staggs R."/>
            <person name="Stansfield I."/>
            <person name="Stumpf M.P.H."/>
            <person name="Sudbery P.E."/>
            <person name="Srikantha T."/>
            <person name="Zeng Q."/>
            <person name="Berman J."/>
            <person name="Berriman M."/>
            <person name="Heitman J."/>
            <person name="Gow N.A.R."/>
            <person name="Lorenz M.C."/>
            <person name="Birren B.W."/>
            <person name="Kellis M."/>
            <person name="Cuomo C.A."/>
        </authorList>
    </citation>
    <scope>NUCLEOTIDE SEQUENCE [LARGE SCALE GENOMIC DNA]</scope>
    <source>
        <strain>ATCC 6260 / CBS 566 / DSM 6381 / JCM 1539 / NBRC 10279 / NRRL Y-324</strain>
    </source>
</reference>
<keyword id="KW-0227">DNA damage</keyword>
<keyword id="KW-0233">DNA recombination</keyword>
<keyword id="KW-0234">DNA repair</keyword>
<keyword id="KW-0255">Endonuclease</keyword>
<keyword id="KW-0378">Hydrolase</keyword>
<keyword id="KW-0479">Metal-binding</keyword>
<keyword id="KW-0540">Nuclease</keyword>
<keyword id="KW-0539">Nucleus</keyword>
<keyword id="KW-1185">Reference proteome</keyword>
<keyword id="KW-0862">Zinc</keyword>
<keyword id="KW-0863">Zinc-finger</keyword>
<accession>A5DFX7</accession>
<proteinExistence type="inferred from homology"/>
<gene>
    <name evidence="1" type="primary">SLX1</name>
    <name type="ORF">PGUG_02178</name>
</gene>